<organism>
    <name type="scientific">Sodalis glossinidius (strain morsitans)</name>
    <dbReference type="NCBI Taxonomy" id="343509"/>
    <lineage>
        <taxon>Bacteria</taxon>
        <taxon>Pseudomonadati</taxon>
        <taxon>Pseudomonadota</taxon>
        <taxon>Gammaproteobacteria</taxon>
        <taxon>Enterobacterales</taxon>
        <taxon>Bruguierivoracaceae</taxon>
        <taxon>Sodalis</taxon>
    </lineage>
</organism>
<accession>Q2NVK4</accession>
<evidence type="ECO:0000255" key="1">
    <source>
        <dbReference type="HAMAP-Rule" id="MF_00385"/>
    </source>
</evidence>
<evidence type="ECO:0000305" key="2"/>
<comment type="similarity">
    <text evidence="1">Belongs to the bacterial ribosomal protein bS16 family.</text>
</comment>
<keyword id="KW-0687">Ribonucleoprotein</keyword>
<keyword id="KW-0689">Ribosomal protein</keyword>
<proteinExistence type="inferred from homology"/>
<gene>
    <name evidence="1" type="primary">rpsP</name>
    <name type="ordered locus">SG0546</name>
</gene>
<dbReference type="EMBL" id="AP008232">
    <property type="protein sequence ID" value="BAE73821.1"/>
    <property type="molecule type" value="Genomic_DNA"/>
</dbReference>
<dbReference type="RefSeq" id="WP_011410519.1">
    <property type="nucleotide sequence ID" value="NZ_LN854557.1"/>
</dbReference>
<dbReference type="SMR" id="Q2NVK4"/>
<dbReference type="STRING" id="343509.SG0546"/>
<dbReference type="KEGG" id="sgl:SG0546"/>
<dbReference type="eggNOG" id="COG0228">
    <property type="taxonomic scope" value="Bacteria"/>
</dbReference>
<dbReference type="HOGENOM" id="CLU_100590_5_1_6"/>
<dbReference type="OrthoDB" id="9807878at2"/>
<dbReference type="BioCyc" id="SGLO343509:SGP1_RS04815-MONOMER"/>
<dbReference type="Proteomes" id="UP000001932">
    <property type="component" value="Chromosome"/>
</dbReference>
<dbReference type="GO" id="GO:0005737">
    <property type="term" value="C:cytoplasm"/>
    <property type="evidence" value="ECO:0007669"/>
    <property type="project" value="UniProtKB-ARBA"/>
</dbReference>
<dbReference type="GO" id="GO:0015935">
    <property type="term" value="C:small ribosomal subunit"/>
    <property type="evidence" value="ECO:0007669"/>
    <property type="project" value="TreeGrafter"/>
</dbReference>
<dbReference type="GO" id="GO:0003735">
    <property type="term" value="F:structural constituent of ribosome"/>
    <property type="evidence" value="ECO:0007669"/>
    <property type="project" value="InterPro"/>
</dbReference>
<dbReference type="GO" id="GO:0006412">
    <property type="term" value="P:translation"/>
    <property type="evidence" value="ECO:0007669"/>
    <property type="project" value="UniProtKB-UniRule"/>
</dbReference>
<dbReference type="FunFam" id="3.30.1320.10:FF:000001">
    <property type="entry name" value="30S ribosomal protein S16"/>
    <property type="match status" value="1"/>
</dbReference>
<dbReference type="Gene3D" id="3.30.1320.10">
    <property type="match status" value="1"/>
</dbReference>
<dbReference type="HAMAP" id="MF_00385">
    <property type="entry name" value="Ribosomal_bS16"/>
    <property type="match status" value="1"/>
</dbReference>
<dbReference type="InterPro" id="IPR000307">
    <property type="entry name" value="Ribosomal_bS16"/>
</dbReference>
<dbReference type="InterPro" id="IPR020592">
    <property type="entry name" value="Ribosomal_bS16_CS"/>
</dbReference>
<dbReference type="InterPro" id="IPR023803">
    <property type="entry name" value="Ribosomal_bS16_dom_sf"/>
</dbReference>
<dbReference type="NCBIfam" id="TIGR00002">
    <property type="entry name" value="S16"/>
    <property type="match status" value="1"/>
</dbReference>
<dbReference type="PANTHER" id="PTHR12919">
    <property type="entry name" value="30S RIBOSOMAL PROTEIN S16"/>
    <property type="match status" value="1"/>
</dbReference>
<dbReference type="PANTHER" id="PTHR12919:SF20">
    <property type="entry name" value="SMALL RIBOSOMAL SUBUNIT PROTEIN BS16M"/>
    <property type="match status" value="1"/>
</dbReference>
<dbReference type="Pfam" id="PF00886">
    <property type="entry name" value="Ribosomal_S16"/>
    <property type="match status" value="1"/>
</dbReference>
<dbReference type="SUPFAM" id="SSF54565">
    <property type="entry name" value="Ribosomal protein S16"/>
    <property type="match status" value="1"/>
</dbReference>
<dbReference type="PROSITE" id="PS00732">
    <property type="entry name" value="RIBOSOMAL_S16"/>
    <property type="match status" value="1"/>
</dbReference>
<reference key="1">
    <citation type="journal article" date="2006" name="Genome Res.">
        <title>Massive genome erosion and functional adaptations provide insights into the symbiotic lifestyle of Sodalis glossinidius in the tsetse host.</title>
        <authorList>
            <person name="Toh H."/>
            <person name="Weiss B.L."/>
            <person name="Perkin S.A.H."/>
            <person name="Yamashita A."/>
            <person name="Oshima K."/>
            <person name="Hattori M."/>
            <person name="Aksoy S."/>
        </authorList>
    </citation>
    <scope>NUCLEOTIDE SEQUENCE [LARGE SCALE GENOMIC DNA]</scope>
    <source>
        <strain>morsitans</strain>
    </source>
</reference>
<sequence length="82" mass="9111">MVTIRLARGGAKKRPFYQIVVTDSRNARDGRFIERIGFFNPIATGQAEGLRLDLDRIEHWVGQGATVSERVSALIKDAKKAA</sequence>
<name>RS16_SODGM</name>
<protein>
    <recommendedName>
        <fullName evidence="1">Small ribosomal subunit protein bS16</fullName>
    </recommendedName>
    <alternativeName>
        <fullName evidence="2">30S ribosomal protein S16</fullName>
    </alternativeName>
</protein>
<feature type="chain" id="PRO_0000243873" description="Small ribosomal subunit protein bS16">
    <location>
        <begin position="1"/>
        <end position="82"/>
    </location>
</feature>